<dbReference type="EC" id="4.1.2.13"/>
<dbReference type="EMBL" id="AE001439">
    <property type="protein sequence ID" value="AAD05734.1"/>
    <property type="molecule type" value="Genomic_DNA"/>
</dbReference>
<dbReference type="PIR" id="C71967">
    <property type="entry name" value="C71967"/>
</dbReference>
<dbReference type="RefSeq" id="WP_000960453.1">
    <property type="nucleotide sequence ID" value="NZ_CP011330.1"/>
</dbReference>
<dbReference type="SMR" id="Q9ZMQ6"/>
<dbReference type="KEGG" id="hpj:jhp_0162"/>
<dbReference type="PATRIC" id="fig|85963.30.peg.860"/>
<dbReference type="eggNOG" id="COG0191">
    <property type="taxonomic scope" value="Bacteria"/>
</dbReference>
<dbReference type="UniPathway" id="UPA00109">
    <property type="reaction ID" value="UER00183"/>
</dbReference>
<dbReference type="Proteomes" id="UP000000804">
    <property type="component" value="Chromosome"/>
</dbReference>
<dbReference type="GO" id="GO:0004332">
    <property type="term" value="F:fructose-bisphosphate aldolase activity"/>
    <property type="evidence" value="ECO:0007669"/>
    <property type="project" value="UniProtKB-EC"/>
</dbReference>
<dbReference type="GO" id="GO:0008270">
    <property type="term" value="F:zinc ion binding"/>
    <property type="evidence" value="ECO:0007669"/>
    <property type="project" value="InterPro"/>
</dbReference>
<dbReference type="GO" id="GO:0030388">
    <property type="term" value="P:fructose 1,6-bisphosphate metabolic process"/>
    <property type="evidence" value="ECO:0007669"/>
    <property type="project" value="InterPro"/>
</dbReference>
<dbReference type="GO" id="GO:0006096">
    <property type="term" value="P:glycolytic process"/>
    <property type="evidence" value="ECO:0007669"/>
    <property type="project" value="UniProtKB-UniPathway"/>
</dbReference>
<dbReference type="CDD" id="cd00947">
    <property type="entry name" value="TBP_aldolase_IIB"/>
    <property type="match status" value="1"/>
</dbReference>
<dbReference type="Gene3D" id="3.20.20.70">
    <property type="entry name" value="Aldolase class I"/>
    <property type="match status" value="1"/>
</dbReference>
<dbReference type="InterPro" id="IPR013785">
    <property type="entry name" value="Aldolase_TIM"/>
</dbReference>
<dbReference type="InterPro" id="IPR050246">
    <property type="entry name" value="Class_II_FBP_aldolase"/>
</dbReference>
<dbReference type="InterPro" id="IPR000771">
    <property type="entry name" value="FBA_II"/>
</dbReference>
<dbReference type="InterPro" id="IPR011289">
    <property type="entry name" value="Fruc_bis_ald_class-2"/>
</dbReference>
<dbReference type="NCBIfam" id="TIGR00167">
    <property type="entry name" value="cbbA"/>
    <property type="match status" value="1"/>
</dbReference>
<dbReference type="NCBIfam" id="TIGR01859">
    <property type="entry name" value="fruc_bis_ald"/>
    <property type="match status" value="1"/>
</dbReference>
<dbReference type="NCBIfam" id="NF004493">
    <property type="entry name" value="PRK05835.1"/>
    <property type="match status" value="1"/>
</dbReference>
<dbReference type="PANTHER" id="PTHR30304">
    <property type="entry name" value="D-TAGATOSE-1,6-BISPHOSPHATE ALDOLASE"/>
    <property type="match status" value="1"/>
</dbReference>
<dbReference type="PANTHER" id="PTHR30304:SF0">
    <property type="entry name" value="D-TAGATOSE-1,6-BISPHOSPHATE ALDOLASE SUBUNIT GATY-RELATED"/>
    <property type="match status" value="1"/>
</dbReference>
<dbReference type="Pfam" id="PF01116">
    <property type="entry name" value="F_bP_aldolase"/>
    <property type="match status" value="1"/>
</dbReference>
<dbReference type="PIRSF" id="PIRSF001359">
    <property type="entry name" value="F_bP_aldolase_II"/>
    <property type="match status" value="1"/>
</dbReference>
<dbReference type="SUPFAM" id="SSF51569">
    <property type="entry name" value="Aldolase"/>
    <property type="match status" value="1"/>
</dbReference>
<dbReference type="PROSITE" id="PS00602">
    <property type="entry name" value="ALDOLASE_CLASS_II_1"/>
    <property type="match status" value="1"/>
</dbReference>
<dbReference type="PROSITE" id="PS00806">
    <property type="entry name" value="ALDOLASE_CLASS_II_2"/>
    <property type="match status" value="1"/>
</dbReference>
<reference key="1">
    <citation type="journal article" date="1999" name="Nature">
        <title>Genomic sequence comparison of two unrelated isolates of the human gastric pathogen Helicobacter pylori.</title>
        <authorList>
            <person name="Alm R.A."/>
            <person name="Ling L.-S.L."/>
            <person name="Moir D.T."/>
            <person name="King B.L."/>
            <person name="Brown E.D."/>
            <person name="Doig P.C."/>
            <person name="Smith D.R."/>
            <person name="Noonan B."/>
            <person name="Guild B.C."/>
            <person name="deJonge B.L."/>
            <person name="Carmel G."/>
            <person name="Tummino P.J."/>
            <person name="Caruso A."/>
            <person name="Uria-Nickelsen M."/>
            <person name="Mills D.M."/>
            <person name="Ives C."/>
            <person name="Gibson R."/>
            <person name="Merberg D."/>
            <person name="Mills S.D."/>
            <person name="Jiang Q."/>
            <person name="Taylor D.E."/>
            <person name="Vovis G.F."/>
            <person name="Trust T.J."/>
        </authorList>
    </citation>
    <scope>NUCLEOTIDE SEQUENCE [LARGE SCALE GENOMIC DNA]</scope>
    <source>
        <strain>J99 / ATCC 700824</strain>
    </source>
</reference>
<proteinExistence type="inferred from homology"/>
<keyword id="KW-0324">Glycolysis</keyword>
<keyword id="KW-0456">Lyase</keyword>
<keyword id="KW-0479">Metal-binding</keyword>
<keyword id="KW-0862">Zinc</keyword>
<comment type="function">
    <text evidence="1">Catalyzes the aldol condensation of dihydroxyacetone phosphate (DHAP or glycerone-phosphate) with glyceraldehyde 3-phosphate (G3P) to form fructose 1,6-bisphosphate (FBP) in gluconeogenesis and the reverse reaction in glycolysis.</text>
</comment>
<comment type="catalytic activity">
    <reaction>
        <text>beta-D-fructose 1,6-bisphosphate = D-glyceraldehyde 3-phosphate + dihydroxyacetone phosphate</text>
        <dbReference type="Rhea" id="RHEA:14729"/>
        <dbReference type="ChEBI" id="CHEBI:32966"/>
        <dbReference type="ChEBI" id="CHEBI:57642"/>
        <dbReference type="ChEBI" id="CHEBI:59776"/>
        <dbReference type="EC" id="4.1.2.13"/>
    </reaction>
</comment>
<comment type="cofactor">
    <cofactor evidence="1">
        <name>Zn(2+)</name>
        <dbReference type="ChEBI" id="CHEBI:29105"/>
    </cofactor>
    <text evidence="1">Binds 2 Zn(2+) ions per subunit. One is catalytic and the other provides a structural contribution.</text>
</comment>
<comment type="pathway">
    <text>Carbohydrate degradation; glycolysis; D-glyceraldehyde 3-phosphate and glycerone phosphate from D-glucose: step 4/4.</text>
</comment>
<comment type="subunit">
    <text evidence="1">Homodimer.</text>
</comment>
<comment type="similarity">
    <text evidence="2">Belongs to the class II fructose-bisphosphate aldolase family.</text>
</comment>
<protein>
    <recommendedName>
        <fullName>Fructose-bisphosphate aldolase</fullName>
        <shortName>FBP aldolase</shortName>
        <shortName>FBPA</shortName>
        <ecNumber>4.1.2.13</ecNumber>
    </recommendedName>
    <alternativeName>
        <fullName>Fructose-1,6-bisphosphate aldolase</fullName>
    </alternativeName>
</protein>
<accession>Q9ZMQ6</accession>
<sequence>MLVKGNEILLKAHKEGYGVGAFNFVNFEMLNAIFEAGNEENSPLFIQASEGAIKYMGIDMAVGMVKIMCERYPHIPVALHLDHGTTFESCEKAVKAGFTSVMIDASHHAFEENLELTSKVVKMAHNAGVSVEAELGRLMGIEDNISVDEKDAVLVNPKEAERFVKESQVDYLAPAIGTSHGAFKFKGEPKLDFERLQEVKRLTNIPLVLHGASAIPDDVRKSYLDAGGDLKGSKGVPFEFLQESIKGGINKVNTDTDLRIAFIAEVRKVANEDKSQFDLRKFFSPAQLALKNVVKERMKLLGSANKI</sequence>
<name>ALF_HELPJ</name>
<gene>
    <name type="primary">fba</name>
    <name type="ordered locus">jhp_0162</name>
</gene>
<organism>
    <name type="scientific">Helicobacter pylori (strain J99 / ATCC 700824)</name>
    <name type="common">Campylobacter pylori J99</name>
    <dbReference type="NCBI Taxonomy" id="85963"/>
    <lineage>
        <taxon>Bacteria</taxon>
        <taxon>Pseudomonadati</taxon>
        <taxon>Campylobacterota</taxon>
        <taxon>Epsilonproteobacteria</taxon>
        <taxon>Campylobacterales</taxon>
        <taxon>Helicobacteraceae</taxon>
        <taxon>Helicobacter</taxon>
    </lineage>
</organism>
<evidence type="ECO:0000250" key="1"/>
<evidence type="ECO:0000305" key="2"/>
<feature type="chain" id="PRO_0000178718" description="Fructose-bisphosphate aldolase">
    <location>
        <begin position="1"/>
        <end position="307"/>
    </location>
</feature>
<feature type="active site" description="Proton donor" evidence="1">
    <location>
        <position position="82"/>
    </location>
</feature>
<feature type="binding site" evidence="1">
    <location>
        <position position="49"/>
    </location>
    <ligand>
        <name>D-glyceraldehyde 3-phosphate</name>
        <dbReference type="ChEBI" id="CHEBI:59776"/>
    </ligand>
</feature>
<feature type="binding site" evidence="1">
    <location>
        <position position="83"/>
    </location>
    <ligand>
        <name>Zn(2+)</name>
        <dbReference type="ChEBI" id="CHEBI:29105"/>
        <label>1</label>
        <note>catalytic</note>
    </ligand>
</feature>
<feature type="binding site" evidence="1">
    <location>
        <position position="104"/>
    </location>
    <ligand>
        <name>Zn(2+)</name>
        <dbReference type="ChEBI" id="CHEBI:29105"/>
        <label>2</label>
    </ligand>
</feature>
<feature type="binding site" evidence="1">
    <location>
        <position position="134"/>
    </location>
    <ligand>
        <name>Zn(2+)</name>
        <dbReference type="ChEBI" id="CHEBI:29105"/>
        <label>2</label>
    </ligand>
</feature>
<feature type="binding site" evidence="1">
    <location>
        <position position="180"/>
    </location>
    <ligand>
        <name>Zn(2+)</name>
        <dbReference type="ChEBI" id="CHEBI:29105"/>
        <label>1</label>
        <note>catalytic</note>
    </ligand>
</feature>
<feature type="binding site" evidence="1">
    <location>
        <position position="181"/>
    </location>
    <ligand>
        <name>dihydroxyacetone phosphate</name>
        <dbReference type="ChEBI" id="CHEBI:57642"/>
    </ligand>
</feature>
<feature type="binding site" evidence="1">
    <location>
        <position position="210"/>
    </location>
    <ligand>
        <name>Zn(2+)</name>
        <dbReference type="ChEBI" id="CHEBI:29105"/>
        <label>1</label>
        <note>catalytic</note>
    </ligand>
</feature>
<feature type="binding site" evidence="1">
    <location>
        <begin position="211"/>
        <end position="213"/>
    </location>
    <ligand>
        <name>dihydroxyacetone phosphate</name>
        <dbReference type="ChEBI" id="CHEBI:57642"/>
    </ligand>
</feature>
<feature type="binding site" evidence="1">
    <location>
        <begin position="253"/>
        <end position="256"/>
    </location>
    <ligand>
        <name>dihydroxyacetone phosphate</name>
        <dbReference type="ChEBI" id="CHEBI:57642"/>
    </ligand>
</feature>